<protein>
    <recommendedName>
        <fullName evidence="8">Type IV secretion system protein CagE</fullName>
        <ecNumber evidence="2">7.4.2.8</ecNumber>
    </recommendedName>
    <alternativeName>
        <fullName>CAG pathogenicity island protein 23</fullName>
    </alternativeName>
    <alternativeName>
        <fullName>Protein PicB</fullName>
    </alternativeName>
</protein>
<proteinExistence type="evidence at protein level"/>
<gene>
    <name evidence="7" type="primary">cagE</name>
    <name type="synonym">cag23</name>
    <name evidence="6" type="synonym">picB</name>
    <name type="ordered locus">HP_0544</name>
</gene>
<keyword id="KW-0067">ATP-binding</keyword>
<keyword id="KW-0997">Cell inner membrane</keyword>
<keyword id="KW-1003">Cell membrane</keyword>
<keyword id="KW-0472">Membrane</keyword>
<keyword id="KW-0547">Nucleotide-binding</keyword>
<keyword id="KW-1185">Reference proteome</keyword>
<keyword id="KW-1278">Translocase</keyword>
<keyword id="KW-0843">Virulence</keyword>
<feature type="chain" id="PRO_0000089281" description="Type IV secretion system protein CagE">
    <location>
        <begin position="1"/>
        <end position="983"/>
    </location>
</feature>
<feature type="binding site" evidence="1">
    <location>
        <begin position="597"/>
        <end position="604"/>
    </location>
    <ligand>
        <name>ATP</name>
        <dbReference type="ChEBI" id="CHEBI:30616"/>
    </ligand>
</feature>
<feature type="sequence conflict" description="In Ref. 2; AAF80209." evidence="8" ref="2">
    <original>V</original>
    <variation>I</variation>
    <location>
        <position position="15"/>
    </location>
</feature>
<feature type="sequence conflict" description="In Ref. 1 and 2." evidence="8" ref="1 2">
    <original>K</original>
    <variation>Q</variation>
    <location>
        <position position="26"/>
    </location>
</feature>
<feature type="sequence conflict" description="In Ref. 1; AAB63389." evidence="8" ref="1">
    <original>A</original>
    <variation>T</variation>
    <location>
        <position position="33"/>
    </location>
</feature>
<feature type="sequence conflict" description="In Ref. 1; AAB63389." evidence="8" ref="1">
    <original>V</original>
    <variation>I</variation>
    <location>
        <position position="39"/>
    </location>
</feature>
<feature type="sequence conflict" description="In Ref. 1 and 2." evidence="8" ref="1 2">
    <original>V</original>
    <variation>I</variation>
    <location>
        <position position="228"/>
    </location>
</feature>
<feature type="sequence conflict" description="In Ref. 1 and 2." evidence="8" ref="1 2">
    <original>S</original>
    <variation>G</variation>
    <location>
        <position position="242"/>
    </location>
</feature>
<feature type="sequence conflict" description="In Ref. 2; AAF80209." evidence="8" ref="2">
    <original>Y</original>
    <variation>F</variation>
    <location>
        <position position="268"/>
    </location>
</feature>
<feature type="sequence conflict" description="In Ref. 1 and 2." evidence="8" ref="1 2">
    <original>I</original>
    <variation>T</variation>
    <location>
        <position position="325"/>
    </location>
</feature>
<feature type="sequence conflict" description="In Ref. 1; AAB63389." evidence="8" ref="1">
    <original>V</original>
    <variation>I</variation>
    <location>
        <position position="335"/>
    </location>
</feature>
<feature type="sequence conflict" description="In Ref. 1; AAB63389." evidence="8" ref="1">
    <original>C</original>
    <variation>S</variation>
    <location>
        <position position="357"/>
    </location>
</feature>
<feature type="sequence conflict" description="In Ref. 1; AAB63389." evidence="8" ref="1">
    <original>E</original>
    <variation>D</variation>
    <location>
        <position position="556"/>
    </location>
</feature>
<feature type="sequence conflict" description="In Ref. 1." evidence="8" ref="1">
    <original>VHNFPANVSKDKQK</original>
    <variation>AIIFLLMSAKTNKS</variation>
    <location>
        <begin position="618"/>
        <end position="631"/>
    </location>
</feature>
<feature type="sequence conflict" description="In Ref. 2; AAF80209." evidence="8" ref="2">
    <original>VH</original>
    <variation>AY</variation>
    <location>
        <begin position="618"/>
        <end position="619"/>
    </location>
</feature>
<feature type="sequence conflict" description="In Ref. 1; AAB63389." evidence="8" ref="1">
    <original>N</original>
    <variation>D</variation>
    <location>
        <position position="678"/>
    </location>
</feature>
<feature type="sequence conflict" description="In Ref. 1; AAB63389." evidence="8" ref="1">
    <original>I</original>
    <variation>V</variation>
    <location>
        <position position="712"/>
    </location>
</feature>
<feature type="sequence conflict" description="In Ref. 2; AAF80209." evidence="8" ref="2">
    <original>D</original>
    <variation>N</variation>
    <location>
        <position position="733"/>
    </location>
</feature>
<feature type="sequence conflict" description="In Ref. 1; AAB63389." evidence="8" ref="1">
    <original>G</original>
    <variation>S</variation>
    <location>
        <position position="837"/>
    </location>
</feature>
<feature type="sequence conflict" description="In Ref. 1; AAB63389." evidence="8" ref="1">
    <original>RNAIVRLATQSITDLLACPIADTIREQCPTKIFLRNDGGNLSDYQRLANVTEKEFEIITKGLDRKILYKQDGSPSVIASFNLRGIPKEYLKILSTDTVFVKEIDKIIQNHSIIDKYQALRQMYQQIKEY</original>
    <variation>ETLLLDLQPKASLIFWLALLLIRLENNALQRFF</variation>
    <location>
        <begin position="855"/>
        <end position="983"/>
    </location>
</feature>
<feature type="sequence conflict" description="In Ref. 2; AAF80209." evidence="8" ref="2">
    <original>K</original>
    <variation>E</variation>
    <location>
        <position position="981"/>
    </location>
</feature>
<accession>Q48252</accession>
<accession>P94836</accession>
<accession>Q9JMX3</accession>
<reference key="1">
    <citation type="journal article" date="1995" name="Mol. Microbiol.">
        <title>Helicobacter pylori picB, a homologue of the Bordetella pertussis toxin secretion protein, is required for induction of IL-8 in gastric epithelial cells.</title>
        <authorList>
            <person name="Tummuru M.K.R."/>
            <person name="Sharma S.A."/>
            <person name="Blaser M.J."/>
        </authorList>
    </citation>
    <scope>NUCLEOTIDE SEQUENCE [GENOMIC DNA]</scope>
    <scope>FUNCTION IN VIRULENCE</scope>
    <source>
        <strain>ATCC 53726 / 84-183</strain>
    </source>
</reference>
<reference key="2">
    <citation type="journal article" date="1996" name="Proc. Natl. Acad. Sci. U.S.A.">
        <title>cag, a pathogenicity island of Helicobacter pylori, encodes type I-specific and disease-associated virulence factors.</title>
        <authorList>
            <person name="Censini S."/>
            <person name="Lange C."/>
            <person name="Xiang Z."/>
            <person name="Crabtree J."/>
            <person name="Ghiara P."/>
            <person name="Borodovsky M."/>
            <person name="Rappuoli R."/>
            <person name="Covacci A."/>
        </authorList>
    </citation>
    <scope>NUCLEOTIDE SEQUENCE [GENOMIC DNA]</scope>
    <scope>FUNCTION IN VIRULENCE</scope>
    <source>
        <strain>DSM 4867 / CCUG 17874 / NCTC 11638</strain>
    </source>
</reference>
<reference key="3">
    <citation type="journal article" date="1997" name="Nature">
        <title>The complete genome sequence of the gastric pathogen Helicobacter pylori.</title>
        <authorList>
            <person name="Tomb J.-F."/>
            <person name="White O."/>
            <person name="Kerlavage A.R."/>
            <person name="Clayton R.A."/>
            <person name="Sutton G.G."/>
            <person name="Fleischmann R.D."/>
            <person name="Ketchum K.A."/>
            <person name="Klenk H.-P."/>
            <person name="Gill S.R."/>
            <person name="Dougherty B.A."/>
            <person name="Nelson K.E."/>
            <person name="Quackenbush J."/>
            <person name="Zhou L."/>
            <person name="Kirkness E.F."/>
            <person name="Peterson S.N."/>
            <person name="Loftus B.J."/>
            <person name="Richardson D.L."/>
            <person name="Dodson R.J."/>
            <person name="Khalak H.G."/>
            <person name="Glodek A."/>
            <person name="McKenney K."/>
            <person name="FitzGerald L.M."/>
            <person name="Lee N."/>
            <person name="Adams M.D."/>
            <person name="Hickey E.K."/>
            <person name="Berg D.E."/>
            <person name="Gocayne J.D."/>
            <person name="Utterback T.R."/>
            <person name="Peterson J.D."/>
            <person name="Kelley J.M."/>
            <person name="Cotton M.D."/>
            <person name="Weidman J.F."/>
            <person name="Fujii C."/>
            <person name="Bowman C."/>
            <person name="Watthey L."/>
            <person name="Wallin E."/>
            <person name="Hayes W.S."/>
            <person name="Borodovsky M."/>
            <person name="Karp P.D."/>
            <person name="Smith H.O."/>
            <person name="Fraser C.M."/>
            <person name="Venter J.C."/>
        </authorList>
    </citation>
    <scope>NUCLEOTIDE SEQUENCE [LARGE SCALE GENOMIC DNA]</scope>
    <source>
        <strain>ATCC 700392 / 26695</strain>
    </source>
</reference>
<reference key="4">
    <citation type="journal article" date="2015" name="PLoS ONE">
        <title>Biochemical analysis of CagE: a VirB4 homologue of Helicobacter pylori Cag-T4SS.</title>
        <authorList>
            <person name="Shariq M."/>
            <person name="Kumar N."/>
            <person name="Kumari R."/>
            <person name="Kumar A."/>
            <person name="Subbarao N."/>
            <person name="Mukhopadhyay G."/>
        </authorList>
    </citation>
    <scope>FUNCTION</scope>
    <scope>ATPASE ACTIVITY</scope>
    <scope>CATALYTIC ACTIVITY</scope>
    <scope>INTERACTION WITH CAGV AND CAGBETA</scope>
    <scope>SUBCELLULAR LOCATION</scope>
    <scope>DISRUPTION PHENOTYPE</scope>
    <source>
        <strain>ATCC 700392 / 26695</strain>
    </source>
</reference>
<reference key="5">
    <citation type="journal article" date="2019" name="MBio">
        <title>In situ molecular architecture of the Helicobacter pylori Cag type IV secretion system.</title>
        <authorList>
            <person name="Hu B."/>
            <person name="Khara P."/>
            <person name="Song L."/>
            <person name="Lin A.S."/>
            <person name="Frick-Cheng A.E."/>
            <person name="Harvey M.L."/>
            <person name="Cover T.L."/>
            <person name="Christie P.J."/>
        </authorList>
    </citation>
    <scope>FUNCTION</scope>
    <scope>SUBUNIT</scope>
    <scope>DISRUPTION PHENOTYPE</scope>
    <scope>CRYOELECTRON TOMOGRAPHY</scope>
</reference>
<name>CAGE_HELPY</name>
<evidence type="ECO:0000255" key="1"/>
<evidence type="ECO:0000269" key="2">
    <source>
    </source>
</evidence>
<evidence type="ECO:0000269" key="3">
    <source>
    </source>
</evidence>
<evidence type="ECO:0000269" key="4">
    <source>
    </source>
</evidence>
<evidence type="ECO:0000269" key="5">
    <source>
    </source>
</evidence>
<evidence type="ECO:0000303" key="6">
    <source>
    </source>
</evidence>
<evidence type="ECO:0000303" key="7">
    <source>
    </source>
</evidence>
<evidence type="ECO:0000305" key="8"/>
<evidence type="ECO:0000305" key="9">
    <source>
    </source>
</evidence>
<sequence length="983" mass="112021">MFVASKQADEQKKLVIEQEVQKRQFKKIEELKADMQKGVNPFFKVLFDGGNRLFGFPETFIYSSIFILFVTIVLSVILFQAYEPVLIVAIVIVLVALGFKKDYRLYQRMERAMKFKKPFLFKGVKNKAFMSIFSMKPSKEMANDIHLNPNREDRLVSAANSYLANNYECFLDDGVILTNNYSLLGTIKLGGIDFLTTSKKDLIELHASIYSVFRNFVTPEFKFYFHTVKKKIVIDETNRDYSLIFSNDFMRAYNEKQKRESFYDISFYLTIEQDLLDTLNEPVMNKKHFADNNFEEFQRIIRAKLENFKDRIELIEELLSKYHPIRLKEYTKDGVIYSKQCEFYNFLVGMNEAPFICNRKDLYLKEKMHGGVKEVYFANKHGKILNDDLSEKYFSAIEISEYAPKSQSDLFDKINALDSEFIFMHAYSPKNSQVLKDKLAFTSRRIIISGGSKEQGMTLGCLSELVGNGDITLGSYGNSLVLFADSFEKMKQSVKECVSSLNAKGFLANAATFSMENYFFAKHCSFITLPFIFDVTSNNFADFIAMRAMSFDGNQENNAWGNSVMTLKSEINSPFYLNFHMPTDFGSASAGHTLILGSTGSGKTVFMSMTLNAMGQFVHNFPANVSKDKQKLTMVYMDKDYGAYGNIVAMGGEYVKIELGTDTGLNPFAWAACVQKTNATMEQKQTAISVVKELVKNLATKSDEKDENGNSISFSLADSNTLAAAVTNLITGDMNLDYPITQLINAFGKDHNDPNGLVARLAPFCKSTNGEFQWLFDNKATDRLDFSKTIIGVDGSSFLDNNDVSPFICFYLFARIQEAMDGRRFVLDIDEAWKYLGDPKVAYFVRDMLKTARKRNAIVRLATQSITDLLACPIADTIREQCPTKIFLRNDGGNLSDYQRLANVTEKEFEIITKGLDRKILYKQDGSPSVIASFNLRGIPKEYLKILSTDTVFVKEIDKIIQNHSIIDKYQALRQMYQQIKEY</sequence>
<dbReference type="EC" id="7.4.2.8" evidence="2"/>
<dbReference type="EMBL" id="U28133">
    <property type="protein sequence ID" value="AAB63389.1"/>
    <property type="molecule type" value="Genomic_DNA"/>
</dbReference>
<dbReference type="EMBL" id="AF282853">
    <property type="protein sequence ID" value="AAF80209.1"/>
    <property type="status" value="ALT_INIT"/>
    <property type="molecule type" value="Genomic_DNA"/>
</dbReference>
<dbReference type="EMBL" id="AE000511">
    <property type="protein sequence ID" value="AAD07610.1"/>
    <property type="molecule type" value="Genomic_DNA"/>
</dbReference>
<dbReference type="PIR" id="H64587">
    <property type="entry name" value="H64587"/>
</dbReference>
<dbReference type="RefSeq" id="NP_207340.1">
    <property type="nucleotide sequence ID" value="NC_000915.1"/>
</dbReference>
<dbReference type="RefSeq" id="WP_000495985.1">
    <property type="nucleotide sequence ID" value="NC_018939.1"/>
</dbReference>
<dbReference type="SMR" id="Q48252"/>
<dbReference type="DIP" id="DIP-3373N"/>
<dbReference type="IntAct" id="Q48252">
    <property type="interactions" value="1"/>
</dbReference>
<dbReference type="MINT" id="Q48252"/>
<dbReference type="STRING" id="85962.HP_0544"/>
<dbReference type="TCDB" id="3.A.7.12.1">
    <property type="family name" value="the type iv (conjugal dna-protein transfer or virb) secretory pathway (ivsp) family"/>
</dbReference>
<dbReference type="PaxDb" id="85962-C694_02805"/>
<dbReference type="EnsemblBacteria" id="AAD07610">
    <property type="protein sequence ID" value="AAD07610"/>
    <property type="gene ID" value="HP_0544"/>
</dbReference>
<dbReference type="KEGG" id="heo:C694_02805"/>
<dbReference type="KEGG" id="hpy:HP_0544"/>
<dbReference type="PATRIC" id="fig|85962.47.peg.587"/>
<dbReference type="eggNOG" id="COG3451">
    <property type="taxonomic scope" value="Bacteria"/>
</dbReference>
<dbReference type="InParanoid" id="Q48252"/>
<dbReference type="OrthoDB" id="9816422at2"/>
<dbReference type="PhylomeDB" id="Q48252"/>
<dbReference type="PHI-base" id="PHI:3143"/>
<dbReference type="PHI-base" id="PHI:7342"/>
<dbReference type="Proteomes" id="UP000000429">
    <property type="component" value="Chromosome"/>
</dbReference>
<dbReference type="GO" id="GO:0005886">
    <property type="term" value="C:plasma membrane"/>
    <property type="evidence" value="ECO:0007669"/>
    <property type="project" value="UniProtKB-SubCell"/>
</dbReference>
<dbReference type="GO" id="GO:0005524">
    <property type="term" value="F:ATP binding"/>
    <property type="evidence" value="ECO:0007669"/>
    <property type="project" value="UniProtKB-KW"/>
</dbReference>
<dbReference type="GO" id="GO:0008564">
    <property type="term" value="F:protein-exporting ATPase activity"/>
    <property type="evidence" value="ECO:0007669"/>
    <property type="project" value="UniProtKB-EC"/>
</dbReference>
<dbReference type="CDD" id="cd01127">
    <property type="entry name" value="TrwB_TraG_TraD_VirD4"/>
    <property type="match status" value="1"/>
</dbReference>
<dbReference type="Gene3D" id="1.10.8.730">
    <property type="match status" value="1"/>
</dbReference>
<dbReference type="Gene3D" id="3.40.50.300">
    <property type="entry name" value="P-loop containing nucleotide triphosphate hydrolases"/>
    <property type="match status" value="1"/>
</dbReference>
<dbReference type="InterPro" id="IPR023298">
    <property type="entry name" value="ATPase_P-typ_TM_dom_sf"/>
</dbReference>
<dbReference type="InterPro" id="IPR004346">
    <property type="entry name" value="CagE_TrbE_VirB"/>
</dbReference>
<dbReference type="InterPro" id="IPR018145">
    <property type="entry name" value="CagE_TrbE_VirB_cntrl_dom"/>
</dbReference>
<dbReference type="InterPro" id="IPR027417">
    <property type="entry name" value="P-loop_NTPase"/>
</dbReference>
<dbReference type="InterPro" id="IPR043964">
    <property type="entry name" value="P-loop_TraG"/>
</dbReference>
<dbReference type="InterPro" id="IPR051162">
    <property type="entry name" value="T4SS_component"/>
</dbReference>
<dbReference type="NCBIfam" id="TIGR00929">
    <property type="entry name" value="VirB4_CagE"/>
    <property type="match status" value="1"/>
</dbReference>
<dbReference type="PANTHER" id="PTHR30121:SF12">
    <property type="entry name" value="TYPE IV SECRETION SYSTEM PROTEIN CAGE"/>
    <property type="match status" value="1"/>
</dbReference>
<dbReference type="PANTHER" id="PTHR30121">
    <property type="entry name" value="UNCHARACTERIZED PROTEIN YJGR-RELATED"/>
    <property type="match status" value="1"/>
</dbReference>
<dbReference type="Pfam" id="PF03135">
    <property type="entry name" value="CagE_TrbE_VirB"/>
    <property type="match status" value="1"/>
</dbReference>
<dbReference type="Pfam" id="PF19044">
    <property type="entry name" value="P-loop_TraG"/>
    <property type="match status" value="1"/>
</dbReference>
<dbReference type="SUPFAM" id="SSF81665">
    <property type="entry name" value="Calcium ATPase, transmembrane domain M"/>
    <property type="match status" value="1"/>
</dbReference>
<dbReference type="SUPFAM" id="SSF52540">
    <property type="entry name" value="P-loop containing nucleoside triphosphate hydrolases"/>
    <property type="match status" value="1"/>
</dbReference>
<organism>
    <name type="scientific">Helicobacter pylori (strain ATCC 700392 / 26695)</name>
    <name type="common">Campylobacter pylori</name>
    <dbReference type="NCBI Taxonomy" id="85962"/>
    <lineage>
        <taxon>Bacteria</taxon>
        <taxon>Pseudomonadati</taxon>
        <taxon>Campylobacterota</taxon>
        <taxon>Epsilonproteobacteria</taxon>
        <taxon>Campylobacterales</taxon>
        <taxon>Helicobacteraceae</taxon>
        <taxon>Helicobacter</taxon>
    </lineage>
</organism>
<comment type="function">
    <text evidence="2 3 4 5 9">ATPase component of the type IV secretion system Cag (Cag-T4SS) (PubMed:26565397). Acts as a molecular motor to provide the energy that is required for the export of proteins (Probable). Required for CagA translocation and induction of IL-8 in host gastric epithelial cells (PubMed:26565397, PubMed:8825091, PubMed:8962108). Plays a key role in Cag-T4SS pilus biogenesis, especially in the localization and stabilization of the pilus-associated components CagI, CagL and the surface protein CagH (PubMed:26565397). Is also critical for assembly of the entire cytoplasmic portion of the Cag inner membrane complex (IMC) (PubMed:31088930).</text>
</comment>
<comment type="catalytic activity">
    <reaction evidence="2">
        <text>ATP + H2O + cellular proteinSide 1 = ADP + phosphate + cellular proteinSide 2.</text>
        <dbReference type="EC" id="7.4.2.8"/>
    </reaction>
</comment>
<comment type="subunit">
    <text evidence="2 3">Component of the Cag type IV secretion system, which is composed of a wheel-shaped outer membrane complex (OMC) and an inner membrane complex (IMC) (PubMed:31088930). Interacts with CagV and CagBeta (PubMed:26565397).</text>
</comment>
<comment type="subcellular location">
    <subcellularLocation>
        <location evidence="2">Cell inner membrane</location>
        <topology evidence="2">Peripheral membrane protein</topology>
        <orientation evidence="2">Cytoplasmic side</orientation>
    </subcellularLocation>
</comment>
<comment type="disruption phenotype">
    <text evidence="2 3">Deletion of the gene affects pilus synthesis. Mutant is unable to translocate CagA and is unable to induce IL-8 secretion by gastric epithelial cells (PubMed:26565397). Deletion has no effect on assembly of the Cag outer membrane complex, but the mutant machine completely lacks the entire cytoplasmic complex (PubMed:31088930).</text>
</comment>
<comment type="similarity">
    <text evidence="8">Belongs to the TrbE/VirB4 family.</text>
</comment>
<comment type="sequence caution" evidence="8">
    <conflict type="erroneous initiation">
        <sequence resource="EMBL-CDS" id="AAF80209"/>
    </conflict>
</comment>